<protein>
    <recommendedName>
        <fullName evidence="1">Phosphopentomutase</fullName>
        <ecNumber evidence="1">5.4.2.7</ecNumber>
    </recommendedName>
    <alternativeName>
        <fullName evidence="1">Phosphodeoxyribomutase</fullName>
    </alternativeName>
</protein>
<gene>
    <name evidence="1" type="primary">deoB</name>
    <name type="ordered locus">Emin_0280</name>
</gene>
<dbReference type="EC" id="5.4.2.7" evidence="1"/>
<dbReference type="EMBL" id="CP001055">
    <property type="protein sequence ID" value="ACC97841.1"/>
    <property type="molecule type" value="Genomic_DNA"/>
</dbReference>
<dbReference type="RefSeq" id="WP_012414456.1">
    <property type="nucleotide sequence ID" value="NC_010644.1"/>
</dbReference>
<dbReference type="SMR" id="B2KBT7"/>
<dbReference type="STRING" id="445932.Emin_0280"/>
<dbReference type="KEGG" id="emi:Emin_0280"/>
<dbReference type="HOGENOM" id="CLU_053861_0_0_0"/>
<dbReference type="OrthoDB" id="9769930at2"/>
<dbReference type="UniPathway" id="UPA00002">
    <property type="reaction ID" value="UER00467"/>
</dbReference>
<dbReference type="Proteomes" id="UP000001029">
    <property type="component" value="Chromosome"/>
</dbReference>
<dbReference type="GO" id="GO:0005829">
    <property type="term" value="C:cytosol"/>
    <property type="evidence" value="ECO:0007669"/>
    <property type="project" value="TreeGrafter"/>
</dbReference>
<dbReference type="GO" id="GO:0000287">
    <property type="term" value="F:magnesium ion binding"/>
    <property type="evidence" value="ECO:0007669"/>
    <property type="project" value="InterPro"/>
</dbReference>
<dbReference type="GO" id="GO:0030145">
    <property type="term" value="F:manganese ion binding"/>
    <property type="evidence" value="ECO:0007669"/>
    <property type="project" value="UniProtKB-UniRule"/>
</dbReference>
<dbReference type="GO" id="GO:0008973">
    <property type="term" value="F:phosphopentomutase activity"/>
    <property type="evidence" value="ECO:0007669"/>
    <property type="project" value="UniProtKB-UniRule"/>
</dbReference>
<dbReference type="GO" id="GO:0006018">
    <property type="term" value="P:2-deoxyribose 1-phosphate catabolic process"/>
    <property type="evidence" value="ECO:0007669"/>
    <property type="project" value="UniProtKB-UniRule"/>
</dbReference>
<dbReference type="GO" id="GO:0006015">
    <property type="term" value="P:5-phosphoribose 1-diphosphate biosynthetic process"/>
    <property type="evidence" value="ECO:0007669"/>
    <property type="project" value="UniProtKB-UniPathway"/>
</dbReference>
<dbReference type="GO" id="GO:0043094">
    <property type="term" value="P:metabolic compound salvage"/>
    <property type="evidence" value="ECO:0007669"/>
    <property type="project" value="InterPro"/>
</dbReference>
<dbReference type="GO" id="GO:0009117">
    <property type="term" value="P:nucleotide metabolic process"/>
    <property type="evidence" value="ECO:0007669"/>
    <property type="project" value="InterPro"/>
</dbReference>
<dbReference type="CDD" id="cd16009">
    <property type="entry name" value="PPM"/>
    <property type="match status" value="1"/>
</dbReference>
<dbReference type="FunFam" id="3.30.70.1250:FF:000001">
    <property type="entry name" value="Phosphopentomutase"/>
    <property type="match status" value="1"/>
</dbReference>
<dbReference type="Gene3D" id="3.40.720.10">
    <property type="entry name" value="Alkaline Phosphatase, subunit A"/>
    <property type="match status" value="1"/>
</dbReference>
<dbReference type="Gene3D" id="3.30.70.1250">
    <property type="entry name" value="Phosphopentomutase"/>
    <property type="match status" value="1"/>
</dbReference>
<dbReference type="HAMAP" id="MF_00740">
    <property type="entry name" value="Phosphopentomut"/>
    <property type="match status" value="1"/>
</dbReference>
<dbReference type="InterPro" id="IPR017850">
    <property type="entry name" value="Alkaline_phosphatase_core_sf"/>
</dbReference>
<dbReference type="InterPro" id="IPR010045">
    <property type="entry name" value="DeoB"/>
</dbReference>
<dbReference type="InterPro" id="IPR006124">
    <property type="entry name" value="Metalloenzyme"/>
</dbReference>
<dbReference type="InterPro" id="IPR024052">
    <property type="entry name" value="Phosphopentomutase_DeoB_cap_sf"/>
</dbReference>
<dbReference type="NCBIfam" id="TIGR01696">
    <property type="entry name" value="deoB"/>
    <property type="match status" value="1"/>
</dbReference>
<dbReference type="NCBIfam" id="NF003766">
    <property type="entry name" value="PRK05362.1"/>
    <property type="match status" value="1"/>
</dbReference>
<dbReference type="PANTHER" id="PTHR21110">
    <property type="entry name" value="PHOSPHOPENTOMUTASE"/>
    <property type="match status" value="1"/>
</dbReference>
<dbReference type="PANTHER" id="PTHR21110:SF0">
    <property type="entry name" value="PHOSPHOPENTOMUTASE"/>
    <property type="match status" value="1"/>
</dbReference>
<dbReference type="Pfam" id="PF01676">
    <property type="entry name" value="Metalloenzyme"/>
    <property type="match status" value="1"/>
</dbReference>
<dbReference type="PIRSF" id="PIRSF001491">
    <property type="entry name" value="Ppentomutase"/>
    <property type="match status" value="1"/>
</dbReference>
<dbReference type="SUPFAM" id="SSF53649">
    <property type="entry name" value="Alkaline phosphatase-like"/>
    <property type="match status" value="1"/>
</dbReference>
<dbReference type="SUPFAM" id="SSF143856">
    <property type="entry name" value="DeoB insert domain-like"/>
    <property type="match status" value="1"/>
</dbReference>
<proteinExistence type="inferred from homology"/>
<reference key="1">
    <citation type="journal article" date="2009" name="Appl. Environ. Microbiol.">
        <title>Genomic analysis of 'Elusimicrobium minutum,' the first cultivated representative of the phylum 'Elusimicrobia' (formerly termite group 1).</title>
        <authorList>
            <person name="Herlemann D.P.R."/>
            <person name="Geissinger O."/>
            <person name="Ikeda-Ohtsubo W."/>
            <person name="Kunin V."/>
            <person name="Sun H."/>
            <person name="Lapidus A."/>
            <person name="Hugenholtz P."/>
            <person name="Brune A."/>
        </authorList>
    </citation>
    <scope>NUCLEOTIDE SEQUENCE [LARGE SCALE GENOMIC DNA]</scope>
    <source>
        <strain>Pei191</strain>
    </source>
</reference>
<name>DEOB_ELUMP</name>
<organism>
    <name type="scientific">Elusimicrobium minutum (strain Pei191)</name>
    <dbReference type="NCBI Taxonomy" id="445932"/>
    <lineage>
        <taxon>Bacteria</taxon>
        <taxon>Pseudomonadati</taxon>
        <taxon>Elusimicrobiota</taxon>
        <taxon>Elusimicrobia</taxon>
        <taxon>Elusimicrobiales</taxon>
        <taxon>Elusimicrobiaceae</taxon>
        <taxon>Elusimicrobium</taxon>
    </lineage>
</organism>
<accession>B2KBT7</accession>
<sequence>MKRVIILMMDSFGIGGAADAAKFGDEGANTLASVAKLNNGLKIPNLISLGLVKAAEASAGVKIETGPQPPAQVNIPSKYGFMREQSHGKDTLSGHWEMAGVPVLFDWGYFKPGYPSFPKELIEQICKEAGIDKILGNKAASGTEILEELGEEHIKTGKPICYTSADSVFQIAAHEKHFGLERLYTICEIAFKYLKPYKIARVIARPFEGERKGEFKRTKNRHDYAVKPPAPTVLDFLKENGGNVISIGKINDIYAKQGITKAVKASGLEELWNTTIEETKNASGNSIIFTNFVDFDMVWGHRRDFKGYAGGLEYFDSRLPELANILQEGDLVFITADHGCDPSYKGTDHTRENVPAIMFGKNVKNGFIGGRETYSDLGQTVAEYLGITKLNNGTSFL</sequence>
<evidence type="ECO:0000255" key="1">
    <source>
        <dbReference type="HAMAP-Rule" id="MF_00740"/>
    </source>
</evidence>
<keyword id="KW-0963">Cytoplasm</keyword>
<keyword id="KW-0413">Isomerase</keyword>
<keyword id="KW-0464">Manganese</keyword>
<keyword id="KW-0479">Metal-binding</keyword>
<keyword id="KW-1185">Reference proteome</keyword>
<comment type="function">
    <text evidence="1">Isomerase that catalyzes the conversion of deoxy-ribose 1-phosphate (dRib-1-P) and ribose 1-phosphate (Rib-1-P) to deoxy-ribose 5-phosphate (dRib-5-P) and ribose 5-phosphate (Rib-5-P), respectively.</text>
</comment>
<comment type="catalytic activity">
    <reaction evidence="1">
        <text>2-deoxy-alpha-D-ribose 1-phosphate = 2-deoxy-D-ribose 5-phosphate</text>
        <dbReference type="Rhea" id="RHEA:27658"/>
        <dbReference type="ChEBI" id="CHEBI:57259"/>
        <dbReference type="ChEBI" id="CHEBI:62877"/>
        <dbReference type="EC" id="5.4.2.7"/>
    </reaction>
</comment>
<comment type="catalytic activity">
    <reaction evidence="1">
        <text>alpha-D-ribose 1-phosphate = D-ribose 5-phosphate</text>
        <dbReference type="Rhea" id="RHEA:18793"/>
        <dbReference type="ChEBI" id="CHEBI:57720"/>
        <dbReference type="ChEBI" id="CHEBI:78346"/>
        <dbReference type="EC" id="5.4.2.7"/>
    </reaction>
</comment>
<comment type="cofactor">
    <cofactor evidence="1">
        <name>Mn(2+)</name>
        <dbReference type="ChEBI" id="CHEBI:29035"/>
    </cofactor>
    <text evidence="1">Binds 2 manganese ions.</text>
</comment>
<comment type="pathway">
    <text evidence="1">Carbohydrate degradation; 2-deoxy-D-ribose 1-phosphate degradation; D-glyceraldehyde 3-phosphate and acetaldehyde from 2-deoxy-alpha-D-ribose 1-phosphate: step 1/2.</text>
</comment>
<comment type="subcellular location">
    <subcellularLocation>
        <location evidence="1">Cytoplasm</location>
    </subcellularLocation>
</comment>
<comment type="similarity">
    <text evidence="1">Belongs to the phosphopentomutase family.</text>
</comment>
<feature type="chain" id="PRO_1000133076" description="Phosphopentomutase">
    <location>
        <begin position="1"/>
        <end position="397"/>
    </location>
</feature>
<feature type="binding site" evidence="1">
    <location>
        <position position="10"/>
    </location>
    <ligand>
        <name>Mn(2+)</name>
        <dbReference type="ChEBI" id="CHEBI:29035"/>
        <label>1</label>
    </ligand>
</feature>
<feature type="binding site" evidence="1">
    <location>
        <position position="296"/>
    </location>
    <ligand>
        <name>Mn(2+)</name>
        <dbReference type="ChEBI" id="CHEBI:29035"/>
        <label>2</label>
    </ligand>
</feature>
<feature type="binding site" evidence="1">
    <location>
        <position position="301"/>
    </location>
    <ligand>
        <name>Mn(2+)</name>
        <dbReference type="ChEBI" id="CHEBI:29035"/>
        <label>2</label>
    </ligand>
</feature>
<feature type="binding site" evidence="1">
    <location>
        <position position="337"/>
    </location>
    <ligand>
        <name>Mn(2+)</name>
        <dbReference type="ChEBI" id="CHEBI:29035"/>
        <label>1</label>
    </ligand>
</feature>
<feature type="binding site" evidence="1">
    <location>
        <position position="338"/>
    </location>
    <ligand>
        <name>Mn(2+)</name>
        <dbReference type="ChEBI" id="CHEBI:29035"/>
        <label>1</label>
    </ligand>
</feature>
<feature type="binding site" evidence="1">
    <location>
        <position position="349"/>
    </location>
    <ligand>
        <name>Mn(2+)</name>
        <dbReference type="ChEBI" id="CHEBI:29035"/>
        <label>2</label>
    </ligand>
</feature>